<sequence length="653" mass="74555">MSTEEDQKLFLSIGLDEKRAKDTLKNKDLTALLKTIIEEASVSKGCDKSIGNLLYSLATCQQVNSPIRSNVSKAIGEEKIKTTIQFQAATQYLKDNKEFNQDTFNDFCGVGVVITPEQIQKAIDDLFTKKATEISEKKWHIPIGDLLNPLKESLKWADLKEVKIMLDKKLETTLGPKVVEAKEKKVAATTTAPVKKIEEQLAAITLKQDASLPTPKRLKIRECSPKFANQRVEVHAWAHHVRNQKKIVFLELRDGTGFLQCVLSGDLVHPSIIDKLLREATVKIVGTLVIPPADKKCPGGVELQADYWELLGPSNADLEGVINQESNVDHLFDQRHIMMRGTRASSIMKIRSLCLFAFRQHFFENHYMEVTPPTLVNTYCEGGSELFTVDYFGKPAYLTQSSQLYLETMLPVLGDNFTITQSYRAEKARTRRHLTEFLHLEAECPFITYEELQDRIEFLVVDVCEKLFKMDPELILSVNPDFKVPKRPFMRMNYSDAIEYCKKNGIQKKLEDGTEVDFEFGDDIPEAQERRMNDQIGEPIFLCRFPAEMKAFYMARCPEDRTLTESLDLLMPGVGEIVGGSMRISDFNELVAAYKKAGLDTDEYYWFTDQRKYGTTQHGGYGLGVERFLTWMLKEEHIRNVCVYQRTKDRITP</sequence>
<evidence type="ECO:0000250" key="1"/>
<evidence type="ECO:0000305" key="2"/>
<dbReference type="EC" id="6.1.1.22"/>
<dbReference type="EMBL" id="AAFI02000013">
    <property type="protein sequence ID" value="EAL69912.1"/>
    <property type="molecule type" value="Genomic_DNA"/>
</dbReference>
<dbReference type="RefSeq" id="XP_643772.1">
    <property type="nucleotide sequence ID" value="XM_638680.1"/>
</dbReference>
<dbReference type="SMR" id="Q554D9"/>
<dbReference type="FunCoup" id="Q554D9">
    <property type="interactions" value="864"/>
</dbReference>
<dbReference type="STRING" id="44689.Q554D9"/>
<dbReference type="PaxDb" id="44689-DDB0231333"/>
<dbReference type="EnsemblProtists" id="EAL69912">
    <property type="protein sequence ID" value="EAL69912"/>
    <property type="gene ID" value="DDB_G0275263"/>
</dbReference>
<dbReference type="GeneID" id="8619817"/>
<dbReference type="KEGG" id="ddi:DDB_G0275263"/>
<dbReference type="dictyBase" id="DDB_G0275263">
    <property type="gene designation" value="asnS1"/>
</dbReference>
<dbReference type="VEuPathDB" id="AmoebaDB:DDB_G0275263"/>
<dbReference type="eggNOG" id="KOG0555">
    <property type="taxonomic scope" value="Eukaryota"/>
</dbReference>
<dbReference type="HOGENOM" id="CLU_015479_0_0_1"/>
<dbReference type="InParanoid" id="Q554D9"/>
<dbReference type="OMA" id="TEPFHRE"/>
<dbReference type="PhylomeDB" id="Q554D9"/>
<dbReference type="PRO" id="PR:Q554D9"/>
<dbReference type="Proteomes" id="UP000002195">
    <property type="component" value="Chromosome 2"/>
</dbReference>
<dbReference type="GO" id="GO:0005737">
    <property type="term" value="C:cytoplasm"/>
    <property type="evidence" value="ECO:0000318"/>
    <property type="project" value="GO_Central"/>
</dbReference>
<dbReference type="GO" id="GO:0045335">
    <property type="term" value="C:phagocytic vesicle"/>
    <property type="evidence" value="ECO:0007005"/>
    <property type="project" value="dictyBase"/>
</dbReference>
<dbReference type="GO" id="GO:0004816">
    <property type="term" value="F:asparagine-tRNA ligase activity"/>
    <property type="evidence" value="ECO:0000318"/>
    <property type="project" value="GO_Central"/>
</dbReference>
<dbReference type="GO" id="GO:0005524">
    <property type="term" value="F:ATP binding"/>
    <property type="evidence" value="ECO:0007669"/>
    <property type="project" value="UniProtKB-KW"/>
</dbReference>
<dbReference type="GO" id="GO:0003676">
    <property type="term" value="F:nucleic acid binding"/>
    <property type="evidence" value="ECO:0007669"/>
    <property type="project" value="InterPro"/>
</dbReference>
<dbReference type="GO" id="GO:0006421">
    <property type="term" value="P:asparaginyl-tRNA aminoacylation"/>
    <property type="evidence" value="ECO:0000318"/>
    <property type="project" value="GO_Central"/>
</dbReference>
<dbReference type="CDD" id="cd04323">
    <property type="entry name" value="AsnRS_cyto_like_N"/>
    <property type="match status" value="1"/>
</dbReference>
<dbReference type="CDD" id="cd00776">
    <property type="entry name" value="AsxRS_core"/>
    <property type="match status" value="1"/>
</dbReference>
<dbReference type="FunFam" id="3.30.930.10:FF:000040">
    <property type="entry name" value="Asparagine--tRNA ligase, cytoplasmic"/>
    <property type="match status" value="1"/>
</dbReference>
<dbReference type="FunFam" id="1.10.10.2420:FF:000001">
    <property type="entry name" value="Glutamine--tRNA ligase cytoplasmic"/>
    <property type="match status" value="1"/>
</dbReference>
<dbReference type="FunFam" id="1.10.8.1290:FF:000002">
    <property type="entry name" value="Glutamine--tRNA ligase cytoplasmic"/>
    <property type="match status" value="1"/>
</dbReference>
<dbReference type="Gene3D" id="1.10.10.2420">
    <property type="match status" value="1"/>
</dbReference>
<dbReference type="Gene3D" id="3.30.930.10">
    <property type="entry name" value="Bira Bifunctional Protein, Domain 2"/>
    <property type="match status" value="1"/>
</dbReference>
<dbReference type="Gene3D" id="1.10.8.1290">
    <property type="entry name" value="Glutaminyl-tRNA synthetase, non-specific RNA binding region part 1, domain 1"/>
    <property type="match status" value="1"/>
</dbReference>
<dbReference type="Gene3D" id="2.40.50.140">
    <property type="entry name" value="Nucleic acid-binding proteins"/>
    <property type="match status" value="1"/>
</dbReference>
<dbReference type="InterPro" id="IPR004364">
    <property type="entry name" value="Aa-tRNA-synt_II"/>
</dbReference>
<dbReference type="InterPro" id="IPR006195">
    <property type="entry name" value="aa-tRNA-synth_II"/>
</dbReference>
<dbReference type="InterPro" id="IPR045864">
    <property type="entry name" value="aa-tRNA-synth_II/BPL/LPL"/>
</dbReference>
<dbReference type="InterPro" id="IPR004522">
    <property type="entry name" value="Asn-tRNA-ligase"/>
</dbReference>
<dbReference type="InterPro" id="IPR002312">
    <property type="entry name" value="Asp/Asn-tRNA-synth_IIb"/>
</dbReference>
<dbReference type="InterPro" id="IPR007639">
    <property type="entry name" value="Gln-tRNA-synth_Ib_RNA-bd_N"/>
</dbReference>
<dbReference type="InterPro" id="IPR042558">
    <property type="entry name" value="Gln-tRNA-synth_Ib_RNA-bd_N_1"/>
</dbReference>
<dbReference type="InterPro" id="IPR042559">
    <property type="entry name" value="Gln-tRNA-synth_Ib_RNA-bd_N_2"/>
</dbReference>
<dbReference type="InterPro" id="IPR012340">
    <property type="entry name" value="NA-bd_OB-fold"/>
</dbReference>
<dbReference type="InterPro" id="IPR004365">
    <property type="entry name" value="NA-bd_OB_tRNA"/>
</dbReference>
<dbReference type="NCBIfam" id="TIGR00457">
    <property type="entry name" value="asnS"/>
    <property type="match status" value="1"/>
</dbReference>
<dbReference type="PANTHER" id="PTHR22594:SF16">
    <property type="entry name" value="ASPARAGINE--TRNA LIGASE, CYTOPLASMIC"/>
    <property type="match status" value="1"/>
</dbReference>
<dbReference type="PANTHER" id="PTHR22594">
    <property type="entry name" value="ASPARTYL/LYSYL-TRNA SYNTHETASE"/>
    <property type="match status" value="1"/>
</dbReference>
<dbReference type="Pfam" id="PF00152">
    <property type="entry name" value="tRNA-synt_2"/>
    <property type="match status" value="1"/>
</dbReference>
<dbReference type="Pfam" id="PF01336">
    <property type="entry name" value="tRNA_anti-codon"/>
    <property type="match status" value="1"/>
</dbReference>
<dbReference type="Pfam" id="PF04558">
    <property type="entry name" value="tRNA_synt_1c_R1"/>
    <property type="match status" value="1"/>
</dbReference>
<dbReference type="PRINTS" id="PR01042">
    <property type="entry name" value="TRNASYNTHASP"/>
</dbReference>
<dbReference type="SUPFAM" id="SSF55681">
    <property type="entry name" value="Class II aaRS and biotin synthetases"/>
    <property type="match status" value="1"/>
</dbReference>
<dbReference type="SUPFAM" id="SSF50249">
    <property type="entry name" value="Nucleic acid-binding proteins"/>
    <property type="match status" value="1"/>
</dbReference>
<dbReference type="PROSITE" id="PS50862">
    <property type="entry name" value="AA_TRNA_LIGASE_II"/>
    <property type="match status" value="1"/>
</dbReference>
<name>SYNC_DICDI</name>
<protein>
    <recommendedName>
        <fullName>Asparagine--tRNA ligase, cytoplasmic</fullName>
        <ecNumber>6.1.1.22</ecNumber>
    </recommendedName>
    <alternativeName>
        <fullName>Asparaginyl-tRNA synthetase</fullName>
        <shortName>AsnRS</shortName>
    </alternativeName>
</protein>
<reference key="1">
    <citation type="journal article" date="2002" name="Nature">
        <title>Sequence and analysis of chromosome 2 of Dictyostelium discoideum.</title>
        <authorList>
            <person name="Gloeckner G."/>
            <person name="Eichinger L."/>
            <person name="Szafranski K."/>
            <person name="Pachebat J.A."/>
            <person name="Bankier A.T."/>
            <person name="Dear P.H."/>
            <person name="Lehmann R."/>
            <person name="Baumgart C."/>
            <person name="Parra G."/>
            <person name="Abril J.F."/>
            <person name="Guigo R."/>
            <person name="Kumpf K."/>
            <person name="Tunggal B."/>
            <person name="Cox E.C."/>
            <person name="Quail M.A."/>
            <person name="Platzer M."/>
            <person name="Rosenthal A."/>
            <person name="Noegel A.A."/>
        </authorList>
    </citation>
    <scope>NUCLEOTIDE SEQUENCE [LARGE SCALE GENOMIC DNA]</scope>
    <source>
        <strain>AX4</strain>
    </source>
</reference>
<reference key="2">
    <citation type="journal article" date="2005" name="Nature">
        <title>The genome of the social amoeba Dictyostelium discoideum.</title>
        <authorList>
            <person name="Eichinger L."/>
            <person name="Pachebat J.A."/>
            <person name="Gloeckner G."/>
            <person name="Rajandream M.A."/>
            <person name="Sucgang R."/>
            <person name="Berriman M."/>
            <person name="Song J."/>
            <person name="Olsen R."/>
            <person name="Szafranski K."/>
            <person name="Xu Q."/>
            <person name="Tunggal B."/>
            <person name="Kummerfeld S."/>
            <person name="Madera M."/>
            <person name="Konfortov B.A."/>
            <person name="Rivero F."/>
            <person name="Bankier A.T."/>
            <person name="Lehmann R."/>
            <person name="Hamlin N."/>
            <person name="Davies R."/>
            <person name="Gaudet P."/>
            <person name="Fey P."/>
            <person name="Pilcher K."/>
            <person name="Chen G."/>
            <person name="Saunders D."/>
            <person name="Sodergren E.J."/>
            <person name="Davis P."/>
            <person name="Kerhornou A."/>
            <person name="Nie X."/>
            <person name="Hall N."/>
            <person name="Anjard C."/>
            <person name="Hemphill L."/>
            <person name="Bason N."/>
            <person name="Farbrother P."/>
            <person name="Desany B."/>
            <person name="Just E."/>
            <person name="Morio T."/>
            <person name="Rost R."/>
            <person name="Churcher C.M."/>
            <person name="Cooper J."/>
            <person name="Haydock S."/>
            <person name="van Driessche N."/>
            <person name="Cronin A."/>
            <person name="Goodhead I."/>
            <person name="Muzny D.M."/>
            <person name="Mourier T."/>
            <person name="Pain A."/>
            <person name="Lu M."/>
            <person name="Harper D."/>
            <person name="Lindsay R."/>
            <person name="Hauser H."/>
            <person name="James K.D."/>
            <person name="Quiles M."/>
            <person name="Madan Babu M."/>
            <person name="Saito T."/>
            <person name="Buchrieser C."/>
            <person name="Wardroper A."/>
            <person name="Felder M."/>
            <person name="Thangavelu M."/>
            <person name="Johnson D."/>
            <person name="Knights A."/>
            <person name="Loulseged H."/>
            <person name="Mungall K.L."/>
            <person name="Oliver K."/>
            <person name="Price C."/>
            <person name="Quail M.A."/>
            <person name="Urushihara H."/>
            <person name="Hernandez J."/>
            <person name="Rabbinowitsch E."/>
            <person name="Steffen D."/>
            <person name="Sanders M."/>
            <person name="Ma J."/>
            <person name="Kohara Y."/>
            <person name="Sharp S."/>
            <person name="Simmonds M.N."/>
            <person name="Spiegler S."/>
            <person name="Tivey A."/>
            <person name="Sugano S."/>
            <person name="White B."/>
            <person name="Walker D."/>
            <person name="Woodward J.R."/>
            <person name="Winckler T."/>
            <person name="Tanaka Y."/>
            <person name="Shaulsky G."/>
            <person name="Schleicher M."/>
            <person name="Weinstock G.M."/>
            <person name="Rosenthal A."/>
            <person name="Cox E.C."/>
            <person name="Chisholm R.L."/>
            <person name="Gibbs R.A."/>
            <person name="Loomis W.F."/>
            <person name="Platzer M."/>
            <person name="Kay R.R."/>
            <person name="Williams J.G."/>
            <person name="Dear P.H."/>
            <person name="Noegel A.A."/>
            <person name="Barrell B.G."/>
            <person name="Kuspa A."/>
        </authorList>
    </citation>
    <scope>NUCLEOTIDE SEQUENCE [LARGE SCALE GENOMIC DNA]</scope>
    <source>
        <strain>AX4</strain>
    </source>
</reference>
<reference key="3">
    <citation type="journal article" date="2006" name="Mol. Cell. Proteomics">
        <title>Proteomics fingerprinting of phagosome maturation and evidence for the role of a Galpha during uptake.</title>
        <authorList>
            <person name="Gotthardt D."/>
            <person name="Blancheteau V."/>
            <person name="Bosserhoff A."/>
            <person name="Ruppert T."/>
            <person name="Delorenzi M."/>
            <person name="Soldati T."/>
        </authorList>
    </citation>
    <scope>IDENTIFICATION BY MASS SPECTROMETRY [LARGE SCALE ANALYSIS]</scope>
    <source>
        <strain>AX2</strain>
    </source>
</reference>
<organism>
    <name type="scientific">Dictyostelium discoideum</name>
    <name type="common">Social amoeba</name>
    <dbReference type="NCBI Taxonomy" id="44689"/>
    <lineage>
        <taxon>Eukaryota</taxon>
        <taxon>Amoebozoa</taxon>
        <taxon>Evosea</taxon>
        <taxon>Eumycetozoa</taxon>
        <taxon>Dictyostelia</taxon>
        <taxon>Dictyosteliales</taxon>
        <taxon>Dictyosteliaceae</taxon>
        <taxon>Dictyostelium</taxon>
    </lineage>
</organism>
<feature type="chain" id="PRO_0000341691" description="Asparagine--tRNA ligase, cytoplasmic">
    <location>
        <begin position="1"/>
        <end position="653"/>
    </location>
</feature>
<comment type="catalytic activity">
    <reaction>
        <text>tRNA(Asn) + L-asparagine + ATP = L-asparaginyl-tRNA(Asn) + AMP + diphosphate + H(+)</text>
        <dbReference type="Rhea" id="RHEA:11180"/>
        <dbReference type="Rhea" id="RHEA-COMP:9659"/>
        <dbReference type="Rhea" id="RHEA-COMP:9674"/>
        <dbReference type="ChEBI" id="CHEBI:15378"/>
        <dbReference type="ChEBI" id="CHEBI:30616"/>
        <dbReference type="ChEBI" id="CHEBI:33019"/>
        <dbReference type="ChEBI" id="CHEBI:58048"/>
        <dbReference type="ChEBI" id="CHEBI:78442"/>
        <dbReference type="ChEBI" id="CHEBI:78515"/>
        <dbReference type="ChEBI" id="CHEBI:456215"/>
        <dbReference type="EC" id="6.1.1.22"/>
    </reaction>
</comment>
<comment type="subcellular location">
    <subcellularLocation>
        <location evidence="1">Cytoplasm</location>
    </subcellularLocation>
</comment>
<comment type="similarity">
    <text evidence="2">Belongs to the class-II aminoacyl-tRNA synthetase family.</text>
</comment>
<gene>
    <name type="primary">asnS1</name>
    <name type="ORF">DDB_G0275263</name>
</gene>
<accession>Q554D9</accession>
<accession>Q869W3</accession>
<keyword id="KW-0030">Aminoacyl-tRNA synthetase</keyword>
<keyword id="KW-0067">ATP-binding</keyword>
<keyword id="KW-0963">Cytoplasm</keyword>
<keyword id="KW-0436">Ligase</keyword>
<keyword id="KW-0547">Nucleotide-binding</keyword>
<keyword id="KW-0648">Protein biosynthesis</keyword>
<keyword id="KW-1185">Reference proteome</keyword>
<proteinExistence type="evidence at protein level"/>